<accession>A7KAI3</accession>
<protein>
    <recommendedName>
        <fullName>Probable cysteine protease ATG4</fullName>
        <ecNumber>3.4.22.-</ecNumber>
    </recommendedName>
    <alternativeName>
        <fullName>Autophagy-related protein 4</fullName>
    </alternativeName>
</protein>
<sequence>MASHSLNTLHTVFEYIWDRELPNDDFTNTLTVLGRTYAPGPPPHQEKAPDLRTLFHKFKPDQAADTEASWPREFLRDVHSRIWLTYRSGFPLIKRAEDGPSPLSFGSLIRGTVDLATVTKGFTTDAGWGCMIRTSQSLLANSLLQLRLGRGWRYDQTRECAKHAEIVSWFVDIPTAPFSIHNFVEQGANCAGKKPGEWFGPSAAARSIQVLCEANYDKTGLKVYFTASGDIYEDELFELAQQGAELRPVLILAGIRLGVKNVNPLYWDFLKKTLGWPQSVGIAGGRPSSSHYFFGFQGDYLFYLDPHVPQKALLIASEAPHESPDPNHYVEVESGLDLDSVHTNKIRKLHLDQMDPSMLVGLLVENRASYDALKHSINSHDQGSRFLNVYDSRPVLAAKSSGGLEESEFVDLGVLSMNEYDAIDDCDVGTCSALLRKERAFSHPVLVAMDPEEPEEIDASIHFDKDASILEKDPDRANETFEEIHVSETESRFEPDEPVVVSHDSAAVM</sequence>
<dbReference type="EC" id="3.4.22.-"/>
<dbReference type="EMBL" id="EF102884">
    <property type="protein sequence ID" value="ABO31288.1"/>
    <property type="molecule type" value="Genomic_DNA"/>
</dbReference>
<dbReference type="SMR" id="A7KAI3"/>
<dbReference type="MEROPS" id="C54.001"/>
<dbReference type="GO" id="GO:0005634">
    <property type="term" value="C:nucleus"/>
    <property type="evidence" value="ECO:0007669"/>
    <property type="project" value="UniProtKB-SubCell"/>
</dbReference>
<dbReference type="GO" id="GO:0000407">
    <property type="term" value="C:phagophore assembly site"/>
    <property type="evidence" value="ECO:0007669"/>
    <property type="project" value="UniProtKB-SubCell"/>
</dbReference>
<dbReference type="GO" id="GO:0004197">
    <property type="term" value="F:cysteine-type endopeptidase activity"/>
    <property type="evidence" value="ECO:0007669"/>
    <property type="project" value="TreeGrafter"/>
</dbReference>
<dbReference type="GO" id="GO:0019786">
    <property type="term" value="F:protein-phosphatidylethanolamide deconjugating activity"/>
    <property type="evidence" value="ECO:0007669"/>
    <property type="project" value="InterPro"/>
</dbReference>
<dbReference type="GO" id="GO:0035973">
    <property type="term" value="P:aggrephagy"/>
    <property type="evidence" value="ECO:0007669"/>
    <property type="project" value="TreeGrafter"/>
</dbReference>
<dbReference type="GO" id="GO:0000045">
    <property type="term" value="P:autophagosome assembly"/>
    <property type="evidence" value="ECO:0007669"/>
    <property type="project" value="TreeGrafter"/>
</dbReference>
<dbReference type="GO" id="GO:0000423">
    <property type="term" value="P:mitophagy"/>
    <property type="evidence" value="ECO:0007669"/>
    <property type="project" value="TreeGrafter"/>
</dbReference>
<dbReference type="GO" id="GO:0034727">
    <property type="term" value="P:piecemeal microautophagy of the nucleus"/>
    <property type="evidence" value="ECO:0007669"/>
    <property type="project" value="TreeGrafter"/>
</dbReference>
<dbReference type="GO" id="GO:0016485">
    <property type="term" value="P:protein processing"/>
    <property type="evidence" value="ECO:0007669"/>
    <property type="project" value="TreeGrafter"/>
</dbReference>
<dbReference type="GO" id="GO:0015031">
    <property type="term" value="P:protein transport"/>
    <property type="evidence" value="ECO:0007669"/>
    <property type="project" value="UniProtKB-KW"/>
</dbReference>
<dbReference type="InterPro" id="IPR038765">
    <property type="entry name" value="Papain-like_cys_pep_sf"/>
</dbReference>
<dbReference type="InterPro" id="IPR005078">
    <property type="entry name" value="Peptidase_C54"/>
</dbReference>
<dbReference type="InterPro" id="IPR046792">
    <property type="entry name" value="Peptidase_C54_cat"/>
</dbReference>
<dbReference type="PANTHER" id="PTHR22624:SF49">
    <property type="entry name" value="CYSTEINE PROTEASE"/>
    <property type="match status" value="1"/>
</dbReference>
<dbReference type="PANTHER" id="PTHR22624">
    <property type="entry name" value="CYSTEINE PROTEASE ATG4"/>
    <property type="match status" value="1"/>
</dbReference>
<dbReference type="Pfam" id="PF03416">
    <property type="entry name" value="Peptidase_C54"/>
    <property type="match status" value="1"/>
</dbReference>
<dbReference type="SUPFAM" id="SSF54001">
    <property type="entry name" value="Cysteine proteinases"/>
    <property type="match status" value="1"/>
</dbReference>
<organism>
    <name type="scientific">Pichia angusta</name>
    <name type="common">Yeast</name>
    <name type="synonym">Hansenula polymorpha</name>
    <dbReference type="NCBI Taxonomy" id="870730"/>
    <lineage>
        <taxon>Eukaryota</taxon>
        <taxon>Fungi</taxon>
        <taxon>Dikarya</taxon>
        <taxon>Ascomycota</taxon>
        <taxon>Saccharomycotina</taxon>
        <taxon>Pichiomycetes</taxon>
        <taxon>Pichiales</taxon>
        <taxon>Pichiaceae</taxon>
        <taxon>Ogataea</taxon>
    </lineage>
</organism>
<keyword id="KW-0072">Autophagy</keyword>
<keyword id="KW-0963">Cytoplasm</keyword>
<keyword id="KW-0378">Hydrolase</keyword>
<keyword id="KW-0539">Nucleus</keyword>
<keyword id="KW-0645">Protease</keyword>
<keyword id="KW-0653">Protein transport</keyword>
<keyword id="KW-0788">Thiol protease</keyword>
<keyword id="KW-0813">Transport</keyword>
<feature type="chain" id="PRO_0000317842" description="Probable cysteine protease ATG4">
    <location>
        <begin position="1"/>
        <end position="509"/>
    </location>
</feature>
<feature type="active site" description="Nucleophile" evidence="1">
    <location>
        <position position="130"/>
    </location>
</feature>
<feature type="active site" evidence="2">
    <location>
        <position position="305"/>
    </location>
</feature>
<feature type="active site" evidence="2">
    <location>
        <position position="307"/>
    </location>
</feature>
<proteinExistence type="inferred from homology"/>
<gene>
    <name type="primary">ATG4</name>
</gene>
<evidence type="ECO:0000250" key="1">
    <source>
        <dbReference type="UniProtKB" id="P53867"/>
    </source>
</evidence>
<evidence type="ECO:0000250" key="2">
    <source>
        <dbReference type="UniProtKB" id="Q9Y4P1"/>
    </source>
</evidence>
<evidence type="ECO:0000269" key="3">
    <source>
    </source>
</evidence>
<evidence type="ECO:0000305" key="4"/>
<reference key="1">
    <citation type="journal article" date="2007" name="Autophagy">
        <title>ATG genes involved in non-selective autophagy are conserved from yeast to man, but the selective Cvt and pexophagy pathways also require organism-specific genes.</title>
        <authorList>
            <person name="Meijer W.H."/>
            <person name="van der Klei I.J."/>
            <person name="Veenhuis M."/>
            <person name="Kiel J.A.K.W."/>
        </authorList>
    </citation>
    <scope>NUCLEOTIDE SEQUENCE [GENOMIC DNA]</scope>
    <scope>FUNCTION</scope>
    <source>
        <strain>ATCC 34438 / CBS 4732 / DSM 70277 / JCM 3621 / NBRC 1476 / NRRL Y-5445</strain>
    </source>
</reference>
<name>ATG4_PICAN</name>
<comment type="function">
    <text evidence="1 3">Cysteine protease that plays a key role in cytoplasm to vacuole transport (Cvt) and autophagy by mediating both proteolytic activation and delipidation of ATG8 (PubMed:17204848). Required for selective autophagic degradation of the nucleus (nucleophagy) as well as for mitophagy which contributes to regulate mitochondrial quantity and quality by eliminating the mitochondria to a basal level to fulfill cellular energy requirements and preventing excess ROS production. The protease activity is required for proteolytic activation of ATG8: cleaves the C-terminal amino acid of ATG8 to reveal a C-terminal glycine. ATG8 ubiquitin-like activity requires the exposure of the glycine at the C-terminus for its conjugation to phosphatidylethanolamine (PE) and its insertion to membranes, which is necessary for autophagy. The ATG8-PE conjugate mediates tethering between adjacent membranes and stimulates membrane hemifusion, leading to expansion of the autophagosomal membrane during autophagy. In addition to the protease activity, also catalyzes deconjugation of PE-conjugated forms of ATG8 during macroautophagy: ATG8 delipidation is required to release the protein from membranes, which facilitates multiple events during macroautophagy, and especially for efficient autophagosome biogenesis, the assembly of ATG9-containing tubulovesicular clusters into phagophores/autophagosomes, and for the disassembly of PAS-associated ATG components. ATG8 delipidation by ATG4 also recycles ATG8-PE generated on inappropriate membranes to maintain a reservoir of unlipidated ATG8 that is required for autophagosome formation at the PAS (By similarity).</text>
</comment>
<comment type="catalytic activity">
    <reaction evidence="1">
        <text>[protein]-C-terminal L-amino acid-glycyl-phosphatidylethanolamide + H2O = [protein]-C-terminal L-amino acid-glycine + a 1,2-diacyl-sn-glycero-3-phosphoethanolamine</text>
        <dbReference type="Rhea" id="RHEA:67548"/>
        <dbReference type="Rhea" id="RHEA-COMP:17323"/>
        <dbReference type="Rhea" id="RHEA-COMP:17324"/>
        <dbReference type="ChEBI" id="CHEBI:15377"/>
        <dbReference type="ChEBI" id="CHEBI:64612"/>
        <dbReference type="ChEBI" id="CHEBI:172940"/>
        <dbReference type="ChEBI" id="CHEBI:172941"/>
    </reaction>
    <physiologicalReaction direction="left-to-right" evidence="1">
        <dbReference type="Rhea" id="RHEA:67549"/>
    </physiologicalReaction>
</comment>
<comment type="subcellular location">
    <subcellularLocation>
        <location evidence="1">Cytoplasm</location>
    </subcellularLocation>
    <subcellularLocation>
        <location evidence="1">Nucleus</location>
    </subcellularLocation>
    <subcellularLocation>
        <location evidence="1">Preautophagosomal structure</location>
    </subcellularLocation>
</comment>
<comment type="similarity">
    <text evidence="4">Belongs to the peptidase C54 family.</text>
</comment>